<organism>
    <name type="scientific">Corynebacterium jeikeium (strain K411)</name>
    <dbReference type="NCBI Taxonomy" id="306537"/>
    <lineage>
        <taxon>Bacteria</taxon>
        <taxon>Bacillati</taxon>
        <taxon>Actinomycetota</taxon>
        <taxon>Actinomycetes</taxon>
        <taxon>Mycobacteriales</taxon>
        <taxon>Corynebacteriaceae</taxon>
        <taxon>Corynebacterium</taxon>
    </lineage>
</organism>
<name>YQGF_CORJK</name>
<gene>
    <name type="ordered locus">jk1037</name>
</gene>
<proteinExistence type="inferred from homology"/>
<protein>
    <recommendedName>
        <fullName evidence="1">Putative pre-16S rRNA nuclease</fullName>
        <ecNumber evidence="1">3.1.-.-</ecNumber>
    </recommendedName>
</protein>
<dbReference type="EC" id="3.1.-.-" evidence="1"/>
<dbReference type="EMBL" id="CR931997">
    <property type="protein sequence ID" value="CAI37201.1"/>
    <property type="molecule type" value="Genomic_DNA"/>
</dbReference>
<dbReference type="RefSeq" id="WP_011273604.1">
    <property type="nucleotide sequence ID" value="NC_007164.1"/>
</dbReference>
<dbReference type="SMR" id="Q4JVF6"/>
<dbReference type="STRING" id="306537.jk1037"/>
<dbReference type="KEGG" id="cjk:jk1037"/>
<dbReference type="PATRIC" id="fig|306537.10.peg.1048"/>
<dbReference type="eggNOG" id="COG0816">
    <property type="taxonomic scope" value="Bacteria"/>
</dbReference>
<dbReference type="HOGENOM" id="CLU_098240_0_1_11"/>
<dbReference type="OrthoDB" id="9790539at2"/>
<dbReference type="Proteomes" id="UP000000545">
    <property type="component" value="Chromosome"/>
</dbReference>
<dbReference type="GO" id="GO:0005829">
    <property type="term" value="C:cytosol"/>
    <property type="evidence" value="ECO:0007669"/>
    <property type="project" value="TreeGrafter"/>
</dbReference>
<dbReference type="GO" id="GO:0004518">
    <property type="term" value="F:nuclease activity"/>
    <property type="evidence" value="ECO:0007669"/>
    <property type="project" value="UniProtKB-KW"/>
</dbReference>
<dbReference type="GO" id="GO:0000967">
    <property type="term" value="P:rRNA 5'-end processing"/>
    <property type="evidence" value="ECO:0007669"/>
    <property type="project" value="UniProtKB-UniRule"/>
</dbReference>
<dbReference type="CDD" id="cd16964">
    <property type="entry name" value="YqgF"/>
    <property type="match status" value="1"/>
</dbReference>
<dbReference type="Gene3D" id="3.30.420.140">
    <property type="entry name" value="YqgF/RNase H-like domain"/>
    <property type="match status" value="1"/>
</dbReference>
<dbReference type="HAMAP" id="MF_00651">
    <property type="entry name" value="Nuclease_YqgF"/>
    <property type="match status" value="1"/>
</dbReference>
<dbReference type="InterPro" id="IPR012337">
    <property type="entry name" value="RNaseH-like_sf"/>
</dbReference>
<dbReference type="InterPro" id="IPR005227">
    <property type="entry name" value="YqgF"/>
</dbReference>
<dbReference type="InterPro" id="IPR006641">
    <property type="entry name" value="YqgF/RNaseH-like_dom"/>
</dbReference>
<dbReference type="InterPro" id="IPR037027">
    <property type="entry name" value="YqgF/RNaseH-like_dom_sf"/>
</dbReference>
<dbReference type="NCBIfam" id="TIGR00250">
    <property type="entry name" value="RNAse_H_YqgF"/>
    <property type="match status" value="1"/>
</dbReference>
<dbReference type="PANTHER" id="PTHR33317">
    <property type="entry name" value="POLYNUCLEOTIDYL TRANSFERASE, RIBONUCLEASE H-LIKE SUPERFAMILY PROTEIN"/>
    <property type="match status" value="1"/>
</dbReference>
<dbReference type="PANTHER" id="PTHR33317:SF4">
    <property type="entry name" value="POLYNUCLEOTIDYL TRANSFERASE, RIBONUCLEASE H-LIKE SUPERFAMILY PROTEIN"/>
    <property type="match status" value="1"/>
</dbReference>
<dbReference type="Pfam" id="PF03652">
    <property type="entry name" value="RuvX"/>
    <property type="match status" value="1"/>
</dbReference>
<dbReference type="SMART" id="SM00732">
    <property type="entry name" value="YqgFc"/>
    <property type="match status" value="1"/>
</dbReference>
<dbReference type="SUPFAM" id="SSF53098">
    <property type="entry name" value="Ribonuclease H-like"/>
    <property type="match status" value="1"/>
</dbReference>
<accession>Q4JVF6</accession>
<comment type="function">
    <text evidence="1">Could be a nuclease involved in processing of the 5'-end of pre-16S rRNA.</text>
</comment>
<comment type="subcellular location">
    <subcellularLocation>
        <location evidence="1">Cytoplasm</location>
    </subcellularLocation>
</comment>
<comment type="similarity">
    <text evidence="1">Belongs to the YqgF nuclease family.</text>
</comment>
<reference key="1">
    <citation type="journal article" date="2005" name="J. Bacteriol.">
        <title>Complete genome sequence and analysis of the multiresistant nosocomial pathogen Corynebacterium jeikeium K411, a lipid-requiring bacterium of the human skin flora.</title>
        <authorList>
            <person name="Tauch A."/>
            <person name="Kaiser O."/>
            <person name="Hain T."/>
            <person name="Goesmann A."/>
            <person name="Weisshaar B."/>
            <person name="Albersmeier A."/>
            <person name="Bekel T."/>
            <person name="Bischoff N."/>
            <person name="Brune I."/>
            <person name="Chakraborty T."/>
            <person name="Kalinowski J."/>
            <person name="Meyer F."/>
            <person name="Rupp O."/>
            <person name="Schneiker S."/>
            <person name="Viehoever P."/>
            <person name="Puehler A."/>
        </authorList>
    </citation>
    <scope>NUCLEOTIDE SEQUENCE [LARGE SCALE GENOMIC DNA]</scope>
    <source>
        <strain>K411</strain>
    </source>
</reference>
<evidence type="ECO:0000255" key="1">
    <source>
        <dbReference type="HAMAP-Rule" id="MF_00651"/>
    </source>
</evidence>
<feature type="chain" id="PRO_0000257524" description="Putative pre-16S rRNA nuclease">
    <location>
        <begin position="1"/>
        <end position="155"/>
    </location>
</feature>
<keyword id="KW-0963">Cytoplasm</keyword>
<keyword id="KW-0378">Hydrolase</keyword>
<keyword id="KW-0540">Nuclease</keyword>
<keyword id="KW-1185">Reference proteome</keyword>
<keyword id="KW-0690">Ribosome biogenesis</keyword>
<sequence>MQTEKPDPSTDPGRGRRLGLDVGTVRIGVAISDPDCILATPVETIQATADDADVQRVVEICRDNFVVEIVVGLPVALRGNHTQSTLNAEEFARLVKEELPDIPVRMVDERMSTMAATHAFHASGVNSKKGRKKIDQAAAVHILQGWLDTRRRALS</sequence>